<feature type="chain" id="PRO_0000167221" description="Small ribosomal subunit protein bS16">
    <location>
        <begin position="1"/>
        <end position="82"/>
    </location>
</feature>
<organism>
    <name type="scientific">Photorhabdus laumondii subsp. laumondii (strain DSM 15139 / CIP 105565 / TT01)</name>
    <name type="common">Photorhabdus luminescens subsp. laumondii</name>
    <dbReference type="NCBI Taxonomy" id="243265"/>
    <lineage>
        <taxon>Bacteria</taxon>
        <taxon>Pseudomonadati</taxon>
        <taxon>Pseudomonadota</taxon>
        <taxon>Gammaproteobacteria</taxon>
        <taxon>Enterobacterales</taxon>
        <taxon>Morganellaceae</taxon>
        <taxon>Photorhabdus</taxon>
    </lineage>
</organism>
<gene>
    <name evidence="1" type="primary">rpsP</name>
    <name type="ordered locus">plu1257</name>
</gene>
<accession>Q7N7A0</accession>
<protein>
    <recommendedName>
        <fullName evidence="1">Small ribosomal subunit protein bS16</fullName>
    </recommendedName>
    <alternativeName>
        <fullName evidence="2">30S ribosomal protein S16</fullName>
    </alternativeName>
</protein>
<name>RS16_PHOLL</name>
<keyword id="KW-1185">Reference proteome</keyword>
<keyword id="KW-0687">Ribonucleoprotein</keyword>
<keyword id="KW-0689">Ribosomal protein</keyword>
<sequence>MVTIRLARGGAKKRPFYQVVVTDSRSPRDGRFIERVGFFNPIATGKAEALRLDLDRIEHWIGLGATVSDRVSTLIKDAKKVA</sequence>
<comment type="similarity">
    <text evidence="1">Belongs to the bacterial ribosomal protein bS16 family.</text>
</comment>
<proteinExistence type="inferred from homology"/>
<reference key="1">
    <citation type="journal article" date="2003" name="Nat. Biotechnol.">
        <title>The genome sequence of the entomopathogenic bacterium Photorhabdus luminescens.</title>
        <authorList>
            <person name="Duchaud E."/>
            <person name="Rusniok C."/>
            <person name="Frangeul L."/>
            <person name="Buchrieser C."/>
            <person name="Givaudan A."/>
            <person name="Taourit S."/>
            <person name="Bocs S."/>
            <person name="Boursaux-Eude C."/>
            <person name="Chandler M."/>
            <person name="Charles J.-F."/>
            <person name="Dassa E."/>
            <person name="Derose R."/>
            <person name="Derzelle S."/>
            <person name="Freyssinet G."/>
            <person name="Gaudriault S."/>
            <person name="Medigue C."/>
            <person name="Lanois A."/>
            <person name="Powell K."/>
            <person name="Siguier P."/>
            <person name="Vincent R."/>
            <person name="Wingate V."/>
            <person name="Zouine M."/>
            <person name="Glaser P."/>
            <person name="Boemare N."/>
            <person name="Danchin A."/>
            <person name="Kunst F."/>
        </authorList>
    </citation>
    <scope>NUCLEOTIDE SEQUENCE [LARGE SCALE GENOMIC DNA]</scope>
    <source>
        <strain>DSM 15139 / CIP 105565 / TT01</strain>
    </source>
</reference>
<dbReference type="EMBL" id="BX571863">
    <property type="protein sequence ID" value="CAE13551.1"/>
    <property type="molecule type" value="Genomic_DNA"/>
</dbReference>
<dbReference type="RefSeq" id="WP_011145581.1">
    <property type="nucleotide sequence ID" value="NC_005126.1"/>
</dbReference>
<dbReference type="SMR" id="Q7N7A0"/>
<dbReference type="STRING" id="243265.plu1257"/>
<dbReference type="GeneID" id="48847531"/>
<dbReference type="KEGG" id="plu:plu1257"/>
<dbReference type="eggNOG" id="COG0228">
    <property type="taxonomic scope" value="Bacteria"/>
</dbReference>
<dbReference type="HOGENOM" id="CLU_100590_5_1_6"/>
<dbReference type="OrthoDB" id="9807878at2"/>
<dbReference type="Proteomes" id="UP000002514">
    <property type="component" value="Chromosome"/>
</dbReference>
<dbReference type="GO" id="GO:0005737">
    <property type="term" value="C:cytoplasm"/>
    <property type="evidence" value="ECO:0007669"/>
    <property type="project" value="UniProtKB-ARBA"/>
</dbReference>
<dbReference type="GO" id="GO:0015935">
    <property type="term" value="C:small ribosomal subunit"/>
    <property type="evidence" value="ECO:0007669"/>
    <property type="project" value="TreeGrafter"/>
</dbReference>
<dbReference type="GO" id="GO:0003735">
    <property type="term" value="F:structural constituent of ribosome"/>
    <property type="evidence" value="ECO:0007669"/>
    <property type="project" value="InterPro"/>
</dbReference>
<dbReference type="GO" id="GO:0006412">
    <property type="term" value="P:translation"/>
    <property type="evidence" value="ECO:0007669"/>
    <property type="project" value="UniProtKB-UniRule"/>
</dbReference>
<dbReference type="FunFam" id="3.30.1320.10:FF:000001">
    <property type="entry name" value="30S ribosomal protein S16"/>
    <property type="match status" value="1"/>
</dbReference>
<dbReference type="Gene3D" id="3.30.1320.10">
    <property type="match status" value="1"/>
</dbReference>
<dbReference type="HAMAP" id="MF_00385">
    <property type="entry name" value="Ribosomal_bS16"/>
    <property type="match status" value="1"/>
</dbReference>
<dbReference type="InterPro" id="IPR000307">
    <property type="entry name" value="Ribosomal_bS16"/>
</dbReference>
<dbReference type="InterPro" id="IPR020592">
    <property type="entry name" value="Ribosomal_bS16_CS"/>
</dbReference>
<dbReference type="InterPro" id="IPR023803">
    <property type="entry name" value="Ribosomal_bS16_dom_sf"/>
</dbReference>
<dbReference type="NCBIfam" id="TIGR00002">
    <property type="entry name" value="S16"/>
    <property type="match status" value="1"/>
</dbReference>
<dbReference type="PANTHER" id="PTHR12919">
    <property type="entry name" value="30S RIBOSOMAL PROTEIN S16"/>
    <property type="match status" value="1"/>
</dbReference>
<dbReference type="PANTHER" id="PTHR12919:SF20">
    <property type="entry name" value="SMALL RIBOSOMAL SUBUNIT PROTEIN BS16M"/>
    <property type="match status" value="1"/>
</dbReference>
<dbReference type="Pfam" id="PF00886">
    <property type="entry name" value="Ribosomal_S16"/>
    <property type="match status" value="1"/>
</dbReference>
<dbReference type="SUPFAM" id="SSF54565">
    <property type="entry name" value="Ribosomal protein S16"/>
    <property type="match status" value="1"/>
</dbReference>
<dbReference type="PROSITE" id="PS00732">
    <property type="entry name" value="RIBOSOMAL_S16"/>
    <property type="match status" value="1"/>
</dbReference>
<evidence type="ECO:0000255" key="1">
    <source>
        <dbReference type="HAMAP-Rule" id="MF_00385"/>
    </source>
</evidence>
<evidence type="ECO:0000305" key="2"/>